<comment type="similarity">
    <text evidence="1">Belongs to the UPF0147 family.</text>
</comment>
<reference key="1">
    <citation type="journal article" date="2008" name="Appl. Environ. Microbiol.">
        <title>The genome sequence of the metal-mobilizing, extremely thermoacidophilic archaeon Metallosphaera sedula provides insights into bioleaching-associated metabolism.</title>
        <authorList>
            <person name="Auernik K.S."/>
            <person name="Maezato Y."/>
            <person name="Blum P.H."/>
            <person name="Kelly R.M."/>
        </authorList>
    </citation>
    <scope>NUCLEOTIDE SEQUENCE [LARGE SCALE GENOMIC DNA]</scope>
    <source>
        <strain>ATCC 51363 / DSM 5348 / JCM 9185 / NBRC 15509 / TH2</strain>
    </source>
</reference>
<organism>
    <name type="scientific">Metallosphaera sedula (strain ATCC 51363 / DSM 5348 / JCM 9185 / NBRC 15509 / TH2)</name>
    <dbReference type="NCBI Taxonomy" id="399549"/>
    <lineage>
        <taxon>Archaea</taxon>
        <taxon>Thermoproteota</taxon>
        <taxon>Thermoprotei</taxon>
        <taxon>Sulfolobales</taxon>
        <taxon>Sulfolobaceae</taxon>
        <taxon>Metallosphaera</taxon>
    </lineage>
</organism>
<gene>
    <name type="ordered locus">Msed_2034</name>
</gene>
<dbReference type="EMBL" id="CP000682">
    <property type="protein sequence ID" value="ABP96174.1"/>
    <property type="molecule type" value="Genomic_DNA"/>
</dbReference>
<dbReference type="RefSeq" id="WP_012021961.1">
    <property type="nucleotide sequence ID" value="NZ_CP139956.1"/>
</dbReference>
<dbReference type="SMR" id="A4YIC2"/>
<dbReference type="STRING" id="399549.Msed_2034"/>
<dbReference type="KEGG" id="mse:Msed_2034"/>
<dbReference type="eggNOG" id="arCOG04308">
    <property type="taxonomic scope" value="Archaea"/>
</dbReference>
<dbReference type="HOGENOM" id="CLU_165882_0_0_2"/>
<dbReference type="Proteomes" id="UP000000242">
    <property type="component" value="Chromosome"/>
</dbReference>
<dbReference type="Gene3D" id="1.20.1440.50">
    <property type="entry name" value="Ta0600-like"/>
    <property type="match status" value="1"/>
</dbReference>
<dbReference type="HAMAP" id="MF_00342">
    <property type="entry name" value="UPF0147"/>
    <property type="match status" value="1"/>
</dbReference>
<dbReference type="InterPro" id="IPR023130">
    <property type="entry name" value="Ta0600-like_sf"/>
</dbReference>
<dbReference type="InterPro" id="IPR005354">
    <property type="entry name" value="UPF0147"/>
</dbReference>
<dbReference type="NCBIfam" id="NF003319">
    <property type="entry name" value="PRK04330.1"/>
    <property type="match status" value="1"/>
</dbReference>
<dbReference type="Pfam" id="PF03685">
    <property type="entry name" value="UPF0147"/>
    <property type="match status" value="1"/>
</dbReference>
<dbReference type="SUPFAM" id="SSF158436">
    <property type="entry name" value="Ta0600-like"/>
    <property type="match status" value="1"/>
</dbReference>
<accession>A4YIC2</accession>
<protein>
    <recommendedName>
        <fullName evidence="1">UPF0147 protein Msed_2034</fullName>
    </recommendedName>
</protein>
<evidence type="ECO:0000255" key="1">
    <source>
        <dbReference type="HAMAP-Rule" id="MF_00342"/>
    </source>
</evidence>
<sequence length="89" mass="9827">MATLYDNEAKIKQAIVLLQKVVNDTSVPRNIRRAASDAIRNLQDPSLSPAVRAANATAILDEISQDPNMPSQTRISIWNVVSILETIRD</sequence>
<name>Y2034_METS5</name>
<keyword id="KW-1185">Reference proteome</keyword>
<feature type="chain" id="PRO_1000079352" description="UPF0147 protein Msed_2034">
    <location>
        <begin position="1"/>
        <end position="89"/>
    </location>
</feature>
<proteinExistence type="inferred from homology"/>